<name>KDPC_HERAR</name>
<sequence>MKSTLRPALVLFAVLTLICGVIYPYAITGIGKLAFSEQAEGSLVSRNGQIVGSSLIGQAFSSPQYFWGRPSATSPMPNNAAASSGSNQGPLNLALIDSVKGRIAALKAADPANTLPVPVDLVTASASGLDPEISLAAAKYQAARIALARKMQLEEVQSIIDRHSKAQYFGFFGEPRVNVLALNLALDQHH</sequence>
<feature type="chain" id="PRO_1000022289" description="Potassium-transporting ATPase KdpC subunit">
    <location>
        <begin position="1"/>
        <end position="190"/>
    </location>
</feature>
<feature type="transmembrane region" description="Helical" evidence="1">
    <location>
        <begin position="10"/>
        <end position="30"/>
    </location>
</feature>
<reference key="1">
    <citation type="journal article" date="2007" name="PLoS Genet.">
        <title>A tale of two oxidation states: bacterial colonization of arsenic-rich environments.</title>
        <authorList>
            <person name="Muller D."/>
            <person name="Medigue C."/>
            <person name="Koechler S."/>
            <person name="Barbe V."/>
            <person name="Barakat M."/>
            <person name="Talla E."/>
            <person name="Bonnefoy V."/>
            <person name="Krin E."/>
            <person name="Arsene-Ploetze F."/>
            <person name="Carapito C."/>
            <person name="Chandler M."/>
            <person name="Cournoyer B."/>
            <person name="Cruveiller S."/>
            <person name="Dossat C."/>
            <person name="Duval S."/>
            <person name="Heymann M."/>
            <person name="Leize E."/>
            <person name="Lieutaud A."/>
            <person name="Lievremont D."/>
            <person name="Makita Y."/>
            <person name="Mangenot S."/>
            <person name="Nitschke W."/>
            <person name="Ortet P."/>
            <person name="Perdrial N."/>
            <person name="Schoepp B."/>
            <person name="Siguier P."/>
            <person name="Simeonova D.D."/>
            <person name="Rouy Z."/>
            <person name="Segurens B."/>
            <person name="Turlin E."/>
            <person name="Vallenet D."/>
            <person name="van Dorsselaer A."/>
            <person name="Weiss S."/>
            <person name="Weissenbach J."/>
            <person name="Lett M.-C."/>
            <person name="Danchin A."/>
            <person name="Bertin P.N."/>
        </authorList>
    </citation>
    <scope>NUCLEOTIDE SEQUENCE [LARGE SCALE GENOMIC DNA]</scope>
    <source>
        <strain>ULPAs1</strain>
    </source>
</reference>
<comment type="function">
    <text evidence="1">Part of the high-affinity ATP-driven potassium transport (or Kdp) system, which catalyzes the hydrolysis of ATP coupled with the electrogenic transport of potassium into the cytoplasm. This subunit acts as a catalytic chaperone that increases the ATP-binding affinity of the ATP-hydrolyzing subunit KdpB by the formation of a transient KdpB/KdpC/ATP ternary complex.</text>
</comment>
<comment type="subunit">
    <text evidence="1">The system is composed of three essential subunits: KdpA, KdpB and KdpC.</text>
</comment>
<comment type="subcellular location">
    <subcellularLocation>
        <location evidence="1">Cell inner membrane</location>
        <topology evidence="1">Single-pass membrane protein</topology>
    </subcellularLocation>
</comment>
<comment type="similarity">
    <text evidence="1">Belongs to the KdpC family.</text>
</comment>
<keyword id="KW-0067">ATP-binding</keyword>
<keyword id="KW-0997">Cell inner membrane</keyword>
<keyword id="KW-1003">Cell membrane</keyword>
<keyword id="KW-0406">Ion transport</keyword>
<keyword id="KW-0472">Membrane</keyword>
<keyword id="KW-0547">Nucleotide-binding</keyword>
<keyword id="KW-0630">Potassium</keyword>
<keyword id="KW-0633">Potassium transport</keyword>
<keyword id="KW-1185">Reference proteome</keyword>
<keyword id="KW-0812">Transmembrane</keyword>
<keyword id="KW-1133">Transmembrane helix</keyword>
<keyword id="KW-0813">Transport</keyword>
<evidence type="ECO:0000255" key="1">
    <source>
        <dbReference type="HAMAP-Rule" id="MF_00276"/>
    </source>
</evidence>
<gene>
    <name evidence="1" type="primary">kdpC</name>
    <name type="ordered locus">HEAR1624</name>
</gene>
<accession>A4G5J7</accession>
<organism>
    <name type="scientific">Herminiimonas arsenicoxydans</name>
    <dbReference type="NCBI Taxonomy" id="204773"/>
    <lineage>
        <taxon>Bacteria</taxon>
        <taxon>Pseudomonadati</taxon>
        <taxon>Pseudomonadota</taxon>
        <taxon>Betaproteobacteria</taxon>
        <taxon>Burkholderiales</taxon>
        <taxon>Oxalobacteraceae</taxon>
        <taxon>Herminiimonas</taxon>
    </lineage>
</organism>
<protein>
    <recommendedName>
        <fullName evidence="1">Potassium-transporting ATPase KdpC subunit</fullName>
    </recommendedName>
    <alternativeName>
        <fullName evidence="1">ATP phosphohydrolase [potassium-transporting] C chain</fullName>
    </alternativeName>
    <alternativeName>
        <fullName evidence="1">Potassium-binding and translocating subunit C</fullName>
    </alternativeName>
    <alternativeName>
        <fullName evidence="1">Potassium-translocating ATPase C chain</fullName>
    </alternativeName>
</protein>
<proteinExistence type="inferred from homology"/>
<dbReference type="EMBL" id="CU207211">
    <property type="protein sequence ID" value="CAL61784.1"/>
    <property type="molecule type" value="Genomic_DNA"/>
</dbReference>
<dbReference type="SMR" id="A4G5J7"/>
<dbReference type="STRING" id="204773.HEAR1624"/>
<dbReference type="KEGG" id="har:HEAR1624"/>
<dbReference type="eggNOG" id="COG2156">
    <property type="taxonomic scope" value="Bacteria"/>
</dbReference>
<dbReference type="HOGENOM" id="CLU_077094_2_0_4"/>
<dbReference type="OrthoDB" id="9788285at2"/>
<dbReference type="Proteomes" id="UP000006697">
    <property type="component" value="Chromosome"/>
</dbReference>
<dbReference type="GO" id="GO:0005886">
    <property type="term" value="C:plasma membrane"/>
    <property type="evidence" value="ECO:0007669"/>
    <property type="project" value="UniProtKB-SubCell"/>
</dbReference>
<dbReference type="GO" id="GO:0005524">
    <property type="term" value="F:ATP binding"/>
    <property type="evidence" value="ECO:0007669"/>
    <property type="project" value="UniProtKB-UniRule"/>
</dbReference>
<dbReference type="GO" id="GO:0008556">
    <property type="term" value="F:P-type potassium transmembrane transporter activity"/>
    <property type="evidence" value="ECO:0007669"/>
    <property type="project" value="InterPro"/>
</dbReference>
<dbReference type="HAMAP" id="MF_00276">
    <property type="entry name" value="KdpC"/>
    <property type="match status" value="1"/>
</dbReference>
<dbReference type="InterPro" id="IPR003820">
    <property type="entry name" value="KdpC"/>
</dbReference>
<dbReference type="NCBIfam" id="TIGR00681">
    <property type="entry name" value="kdpC"/>
    <property type="match status" value="1"/>
</dbReference>
<dbReference type="NCBIfam" id="NF001454">
    <property type="entry name" value="PRK00315.1"/>
    <property type="match status" value="1"/>
</dbReference>
<dbReference type="PANTHER" id="PTHR30042">
    <property type="entry name" value="POTASSIUM-TRANSPORTING ATPASE C CHAIN"/>
    <property type="match status" value="1"/>
</dbReference>
<dbReference type="PANTHER" id="PTHR30042:SF2">
    <property type="entry name" value="POTASSIUM-TRANSPORTING ATPASE KDPC SUBUNIT"/>
    <property type="match status" value="1"/>
</dbReference>
<dbReference type="Pfam" id="PF02669">
    <property type="entry name" value="KdpC"/>
    <property type="match status" value="1"/>
</dbReference>
<dbReference type="PIRSF" id="PIRSF001296">
    <property type="entry name" value="K_ATPase_KdpC"/>
    <property type="match status" value="1"/>
</dbReference>